<gene>
    <name evidence="1" type="primary">asnA</name>
    <name type="ordered locus">ECSE_4034</name>
</gene>
<proteinExistence type="inferred from homology"/>
<protein>
    <recommendedName>
        <fullName evidence="1">Aspartate--ammonia ligase</fullName>
        <ecNumber evidence="1">6.3.1.1</ecNumber>
    </recommendedName>
    <alternativeName>
        <fullName evidence="1">Asparagine synthetase A</fullName>
    </alternativeName>
</protein>
<reference key="1">
    <citation type="journal article" date="2008" name="DNA Res.">
        <title>Complete genome sequence and comparative analysis of the wild-type commensal Escherichia coli strain SE11 isolated from a healthy adult.</title>
        <authorList>
            <person name="Oshima K."/>
            <person name="Toh H."/>
            <person name="Ogura Y."/>
            <person name="Sasamoto H."/>
            <person name="Morita H."/>
            <person name="Park S.-H."/>
            <person name="Ooka T."/>
            <person name="Iyoda S."/>
            <person name="Taylor T.D."/>
            <person name="Hayashi T."/>
            <person name="Itoh K."/>
            <person name="Hattori M."/>
        </authorList>
    </citation>
    <scope>NUCLEOTIDE SEQUENCE [LARGE SCALE GENOMIC DNA]</scope>
    <source>
        <strain>SE11</strain>
    </source>
</reference>
<dbReference type="EC" id="6.3.1.1" evidence="1"/>
<dbReference type="EMBL" id="AP009240">
    <property type="protein sequence ID" value="BAG79558.1"/>
    <property type="molecule type" value="Genomic_DNA"/>
</dbReference>
<dbReference type="RefSeq" id="WP_000845133.1">
    <property type="nucleotide sequence ID" value="NC_011415.1"/>
</dbReference>
<dbReference type="SMR" id="B6I3Y1"/>
<dbReference type="GeneID" id="75205462"/>
<dbReference type="KEGG" id="ecy:ECSE_4034"/>
<dbReference type="HOGENOM" id="CLU_071543_0_0_6"/>
<dbReference type="UniPathway" id="UPA00134">
    <property type="reaction ID" value="UER00194"/>
</dbReference>
<dbReference type="Proteomes" id="UP000008199">
    <property type="component" value="Chromosome"/>
</dbReference>
<dbReference type="GO" id="GO:0005829">
    <property type="term" value="C:cytosol"/>
    <property type="evidence" value="ECO:0007669"/>
    <property type="project" value="TreeGrafter"/>
</dbReference>
<dbReference type="GO" id="GO:0004071">
    <property type="term" value="F:aspartate-ammonia ligase activity"/>
    <property type="evidence" value="ECO:0007669"/>
    <property type="project" value="UniProtKB-UniRule"/>
</dbReference>
<dbReference type="GO" id="GO:0005524">
    <property type="term" value="F:ATP binding"/>
    <property type="evidence" value="ECO:0007669"/>
    <property type="project" value="UniProtKB-UniRule"/>
</dbReference>
<dbReference type="GO" id="GO:0070981">
    <property type="term" value="P:L-asparagine biosynthetic process"/>
    <property type="evidence" value="ECO:0007669"/>
    <property type="project" value="UniProtKB-UniRule"/>
</dbReference>
<dbReference type="CDD" id="cd00645">
    <property type="entry name" value="AsnA"/>
    <property type="match status" value="1"/>
</dbReference>
<dbReference type="FunFam" id="3.30.930.10:FF:000025">
    <property type="entry name" value="Aspartate--ammonia ligase"/>
    <property type="match status" value="1"/>
</dbReference>
<dbReference type="Gene3D" id="3.30.930.10">
    <property type="entry name" value="Bira Bifunctional Protein, Domain 2"/>
    <property type="match status" value="1"/>
</dbReference>
<dbReference type="HAMAP" id="MF_00555">
    <property type="entry name" value="AsnA"/>
    <property type="match status" value="1"/>
</dbReference>
<dbReference type="InterPro" id="IPR006195">
    <property type="entry name" value="aa-tRNA-synth_II"/>
</dbReference>
<dbReference type="InterPro" id="IPR045864">
    <property type="entry name" value="aa-tRNA-synth_II/BPL/LPL"/>
</dbReference>
<dbReference type="InterPro" id="IPR004618">
    <property type="entry name" value="AsnA"/>
</dbReference>
<dbReference type="NCBIfam" id="TIGR00669">
    <property type="entry name" value="asnA"/>
    <property type="match status" value="1"/>
</dbReference>
<dbReference type="PANTHER" id="PTHR30073">
    <property type="entry name" value="ASPARTATE--AMMONIA LIGASE"/>
    <property type="match status" value="1"/>
</dbReference>
<dbReference type="PANTHER" id="PTHR30073:SF5">
    <property type="entry name" value="ASPARTATE--AMMONIA LIGASE"/>
    <property type="match status" value="1"/>
</dbReference>
<dbReference type="Pfam" id="PF03590">
    <property type="entry name" value="AsnA"/>
    <property type="match status" value="1"/>
</dbReference>
<dbReference type="PIRSF" id="PIRSF001555">
    <property type="entry name" value="Asp_ammon_ligase"/>
    <property type="match status" value="1"/>
</dbReference>
<dbReference type="SUPFAM" id="SSF55681">
    <property type="entry name" value="Class II aaRS and biotin synthetases"/>
    <property type="match status" value="1"/>
</dbReference>
<dbReference type="PROSITE" id="PS50862">
    <property type="entry name" value="AA_TRNA_LIGASE_II"/>
    <property type="match status" value="1"/>
</dbReference>
<sequence length="330" mass="36691">MKTAYIAKQRQISFVKSHFSRQLEERLGLIEVQAPILSRVGDGTQDNLSGCEKAVQVKVKALPDAQFEVVHSLAKWKRQTLGQHDFSAGEGLYTHMKALRPDEERLSPLHSVYVDQWDWERVMGDGERQFSTLKSTVEAIWAGIKATEAAVSEEFGLAPFLPDQIHFVHSQELLSRYPDLDAKGRERAIAKDLGAVFLVGIGGKLSDGHRHDVRAPDYDDWSTPSELGHAGLNGDILVWNPVLEDAFELSSMGIRVDADTLKHQLALTGDEDRLQLEWHQALLRGEMPQTIGGGIGQSRLTMLLLQLPHIGQVQCGVWPAAVRENVPSLL</sequence>
<feature type="chain" id="PRO_1000129117" description="Aspartate--ammonia ligase">
    <location>
        <begin position="1"/>
        <end position="330"/>
    </location>
</feature>
<keyword id="KW-0028">Amino-acid biosynthesis</keyword>
<keyword id="KW-0061">Asparagine biosynthesis</keyword>
<keyword id="KW-0067">ATP-binding</keyword>
<keyword id="KW-0963">Cytoplasm</keyword>
<keyword id="KW-0436">Ligase</keyword>
<keyword id="KW-0547">Nucleotide-binding</keyword>
<name>ASNA_ECOSE</name>
<evidence type="ECO:0000255" key="1">
    <source>
        <dbReference type="HAMAP-Rule" id="MF_00555"/>
    </source>
</evidence>
<comment type="catalytic activity">
    <reaction evidence="1">
        <text>L-aspartate + NH4(+) + ATP = L-asparagine + AMP + diphosphate + H(+)</text>
        <dbReference type="Rhea" id="RHEA:11372"/>
        <dbReference type="ChEBI" id="CHEBI:15378"/>
        <dbReference type="ChEBI" id="CHEBI:28938"/>
        <dbReference type="ChEBI" id="CHEBI:29991"/>
        <dbReference type="ChEBI" id="CHEBI:30616"/>
        <dbReference type="ChEBI" id="CHEBI:33019"/>
        <dbReference type="ChEBI" id="CHEBI:58048"/>
        <dbReference type="ChEBI" id="CHEBI:456215"/>
        <dbReference type="EC" id="6.3.1.1"/>
    </reaction>
</comment>
<comment type="pathway">
    <text evidence="1">Amino-acid biosynthesis; L-asparagine biosynthesis; L-asparagine from L-aspartate (ammonia route): step 1/1.</text>
</comment>
<comment type="subcellular location">
    <subcellularLocation>
        <location evidence="1">Cytoplasm</location>
    </subcellularLocation>
</comment>
<comment type="similarity">
    <text evidence="1">Belongs to the class-II aminoacyl-tRNA synthetase family. AsnA subfamily.</text>
</comment>
<accession>B6I3Y1</accession>
<organism>
    <name type="scientific">Escherichia coli (strain SE11)</name>
    <dbReference type="NCBI Taxonomy" id="409438"/>
    <lineage>
        <taxon>Bacteria</taxon>
        <taxon>Pseudomonadati</taxon>
        <taxon>Pseudomonadota</taxon>
        <taxon>Gammaproteobacteria</taxon>
        <taxon>Enterobacterales</taxon>
        <taxon>Enterobacteriaceae</taxon>
        <taxon>Escherichia</taxon>
    </lineage>
</organism>